<comment type="function">
    <text evidence="1">Catalyzes the condensation of ATP and 5-phosphoribose 1-diphosphate to form N'-(5'-phosphoribosyl)-ATP (PR-ATP). Has a crucial role in the pathway because the rate of histidine biosynthesis seems to be controlled primarily by regulation of HisG enzymatic activity.</text>
</comment>
<comment type="catalytic activity">
    <reaction evidence="1">
        <text>1-(5-phospho-beta-D-ribosyl)-ATP + diphosphate = 5-phospho-alpha-D-ribose 1-diphosphate + ATP</text>
        <dbReference type="Rhea" id="RHEA:18473"/>
        <dbReference type="ChEBI" id="CHEBI:30616"/>
        <dbReference type="ChEBI" id="CHEBI:33019"/>
        <dbReference type="ChEBI" id="CHEBI:58017"/>
        <dbReference type="ChEBI" id="CHEBI:73183"/>
        <dbReference type="EC" id="2.4.2.17"/>
    </reaction>
</comment>
<comment type="pathway">
    <text evidence="1">Amino-acid biosynthesis; L-histidine biosynthesis; L-histidine from 5-phospho-alpha-D-ribose 1-diphosphate: step 1/9.</text>
</comment>
<comment type="subunit">
    <text evidence="1">Heteromultimer composed of HisG and HisZ subunits.</text>
</comment>
<comment type="subcellular location">
    <subcellularLocation>
        <location evidence="1">Cytoplasm</location>
    </subcellularLocation>
</comment>
<comment type="domain">
    <text>Lacks the C-terminal regulatory region which is replaced by HisZ.</text>
</comment>
<comment type="similarity">
    <text evidence="1">Belongs to the ATP phosphoribosyltransferase family. Short subfamily.</text>
</comment>
<feature type="chain" id="PRO_1000213258" description="ATP phosphoribosyltransferase">
    <location>
        <begin position="1"/>
        <end position="211"/>
    </location>
</feature>
<protein>
    <recommendedName>
        <fullName evidence="1">ATP phosphoribosyltransferase</fullName>
        <shortName evidence="1">ATP-PRT</shortName>
        <shortName evidence="1">ATP-PRTase</shortName>
        <ecNumber evidence="1">2.4.2.17</ecNumber>
    </recommendedName>
</protein>
<name>HIS1_CLOB6</name>
<gene>
    <name evidence="1" type="primary">hisG</name>
    <name type="ordered locus">CLJ_B1673</name>
</gene>
<sequence length="211" mass="23890">MKKVKIALTKGRLEKKAIEIFKAININTRELEDKGRKLIFNCENEEYNIELFLVKAKDVETYVEYGAADIGIVGKDTLMETDKEFYEVLDLNMGKCKFAVAALPSFKLDQGYNRKKIATKYPNIAREYFRKKCMDVELIKIEGSVELGPIVGLADAIVDIVETGNTLRENGLAVVEDICEISARMIVNKASMKTKKDEVIKIVENISEVIR</sequence>
<organism>
    <name type="scientific">Clostridium botulinum (strain 657 / Type Ba4)</name>
    <dbReference type="NCBI Taxonomy" id="515621"/>
    <lineage>
        <taxon>Bacteria</taxon>
        <taxon>Bacillati</taxon>
        <taxon>Bacillota</taxon>
        <taxon>Clostridia</taxon>
        <taxon>Eubacteriales</taxon>
        <taxon>Clostridiaceae</taxon>
        <taxon>Clostridium</taxon>
    </lineage>
</organism>
<dbReference type="EC" id="2.4.2.17" evidence="1"/>
<dbReference type="EMBL" id="CP001083">
    <property type="protein sequence ID" value="ACQ53550.1"/>
    <property type="molecule type" value="Genomic_DNA"/>
</dbReference>
<dbReference type="RefSeq" id="WP_003360803.1">
    <property type="nucleotide sequence ID" value="NC_012658.1"/>
</dbReference>
<dbReference type="SMR" id="C3KVX0"/>
<dbReference type="KEGG" id="cbi:CLJ_B1673"/>
<dbReference type="HOGENOM" id="CLU_038115_2_0_9"/>
<dbReference type="UniPathway" id="UPA00031">
    <property type="reaction ID" value="UER00006"/>
</dbReference>
<dbReference type="Proteomes" id="UP000002333">
    <property type="component" value="Chromosome"/>
</dbReference>
<dbReference type="GO" id="GO:0005737">
    <property type="term" value="C:cytoplasm"/>
    <property type="evidence" value="ECO:0007669"/>
    <property type="project" value="UniProtKB-SubCell"/>
</dbReference>
<dbReference type="GO" id="GO:0005524">
    <property type="term" value="F:ATP binding"/>
    <property type="evidence" value="ECO:0007669"/>
    <property type="project" value="UniProtKB-KW"/>
</dbReference>
<dbReference type="GO" id="GO:0003879">
    <property type="term" value="F:ATP phosphoribosyltransferase activity"/>
    <property type="evidence" value="ECO:0007669"/>
    <property type="project" value="UniProtKB-UniRule"/>
</dbReference>
<dbReference type="GO" id="GO:0000105">
    <property type="term" value="P:L-histidine biosynthetic process"/>
    <property type="evidence" value="ECO:0007669"/>
    <property type="project" value="UniProtKB-UniRule"/>
</dbReference>
<dbReference type="CDD" id="cd13595">
    <property type="entry name" value="PBP2_HisGs"/>
    <property type="match status" value="1"/>
</dbReference>
<dbReference type="FunFam" id="3.40.190.10:FF:000008">
    <property type="entry name" value="ATP phosphoribosyltransferase"/>
    <property type="match status" value="1"/>
</dbReference>
<dbReference type="Gene3D" id="3.40.190.10">
    <property type="entry name" value="Periplasmic binding protein-like II"/>
    <property type="match status" value="2"/>
</dbReference>
<dbReference type="HAMAP" id="MF_01018">
    <property type="entry name" value="HisG_Short"/>
    <property type="match status" value="1"/>
</dbReference>
<dbReference type="InterPro" id="IPR013820">
    <property type="entry name" value="ATP_PRibTrfase_cat"/>
</dbReference>
<dbReference type="InterPro" id="IPR018198">
    <property type="entry name" value="ATP_PRibTrfase_CS"/>
</dbReference>
<dbReference type="InterPro" id="IPR001348">
    <property type="entry name" value="ATP_PRibTrfase_HisG"/>
</dbReference>
<dbReference type="InterPro" id="IPR024893">
    <property type="entry name" value="ATP_PRibTrfase_HisG_short"/>
</dbReference>
<dbReference type="NCBIfam" id="TIGR00070">
    <property type="entry name" value="hisG"/>
    <property type="match status" value="1"/>
</dbReference>
<dbReference type="PANTHER" id="PTHR21403:SF8">
    <property type="entry name" value="ATP PHOSPHORIBOSYLTRANSFERASE"/>
    <property type="match status" value="1"/>
</dbReference>
<dbReference type="PANTHER" id="PTHR21403">
    <property type="entry name" value="ATP PHOSPHORIBOSYLTRANSFERASE ATP-PRTASE"/>
    <property type="match status" value="1"/>
</dbReference>
<dbReference type="Pfam" id="PF01634">
    <property type="entry name" value="HisG"/>
    <property type="match status" value="1"/>
</dbReference>
<dbReference type="SUPFAM" id="SSF53850">
    <property type="entry name" value="Periplasmic binding protein-like II"/>
    <property type="match status" value="1"/>
</dbReference>
<dbReference type="PROSITE" id="PS01316">
    <property type="entry name" value="ATP_P_PHORIBOSYLTR"/>
    <property type="match status" value="1"/>
</dbReference>
<evidence type="ECO:0000255" key="1">
    <source>
        <dbReference type="HAMAP-Rule" id="MF_01018"/>
    </source>
</evidence>
<keyword id="KW-0028">Amino-acid biosynthesis</keyword>
<keyword id="KW-0067">ATP-binding</keyword>
<keyword id="KW-0963">Cytoplasm</keyword>
<keyword id="KW-0328">Glycosyltransferase</keyword>
<keyword id="KW-0368">Histidine biosynthesis</keyword>
<keyword id="KW-0547">Nucleotide-binding</keyword>
<keyword id="KW-0808">Transferase</keyword>
<proteinExistence type="inferred from homology"/>
<reference key="1">
    <citation type="submission" date="2008-05" db="EMBL/GenBank/DDBJ databases">
        <title>Genome sequence of Clostridium botulinum Ba4 strain 657.</title>
        <authorList>
            <person name="Shrivastava S."/>
            <person name="Brown J.L."/>
            <person name="Bruce D."/>
            <person name="Detter C."/>
            <person name="Munk C."/>
            <person name="Smith L.A."/>
            <person name="Smith T.J."/>
            <person name="Sutton G."/>
            <person name="Brettin T.S."/>
        </authorList>
    </citation>
    <scope>NUCLEOTIDE SEQUENCE [LARGE SCALE GENOMIC DNA]</scope>
    <source>
        <strain>657 / Type Ba4</strain>
    </source>
</reference>
<accession>C3KVX0</accession>